<name>RF1_SORC5</name>
<gene>
    <name evidence="1" type="primary">prfA</name>
    <name type="ordered locus">sce9028</name>
</gene>
<accession>A9G9L1</accession>
<protein>
    <recommendedName>
        <fullName evidence="1">Peptide chain release factor 1</fullName>
        <shortName evidence="1">RF-1</shortName>
    </recommendedName>
</protein>
<evidence type="ECO:0000255" key="1">
    <source>
        <dbReference type="HAMAP-Rule" id="MF_00093"/>
    </source>
</evidence>
<proteinExistence type="inferred from homology"/>
<dbReference type="EMBL" id="AM746676">
    <property type="protein sequence ID" value="CAN99200.1"/>
    <property type="molecule type" value="Genomic_DNA"/>
</dbReference>
<dbReference type="RefSeq" id="WP_012241639.1">
    <property type="nucleotide sequence ID" value="NC_010162.1"/>
</dbReference>
<dbReference type="SMR" id="A9G9L1"/>
<dbReference type="STRING" id="448385.sce9028"/>
<dbReference type="KEGG" id="scl:sce9028"/>
<dbReference type="eggNOG" id="COG0216">
    <property type="taxonomic scope" value="Bacteria"/>
</dbReference>
<dbReference type="HOGENOM" id="CLU_036856_0_1_7"/>
<dbReference type="OrthoDB" id="9806673at2"/>
<dbReference type="BioCyc" id="SCEL448385:SCE_RS46245-MONOMER"/>
<dbReference type="Proteomes" id="UP000002139">
    <property type="component" value="Chromosome"/>
</dbReference>
<dbReference type="GO" id="GO:0005737">
    <property type="term" value="C:cytoplasm"/>
    <property type="evidence" value="ECO:0007669"/>
    <property type="project" value="UniProtKB-SubCell"/>
</dbReference>
<dbReference type="GO" id="GO:0016149">
    <property type="term" value="F:translation release factor activity, codon specific"/>
    <property type="evidence" value="ECO:0007669"/>
    <property type="project" value="UniProtKB-UniRule"/>
</dbReference>
<dbReference type="FunFam" id="3.30.160.20:FF:000004">
    <property type="entry name" value="Peptide chain release factor 1"/>
    <property type="match status" value="1"/>
</dbReference>
<dbReference type="FunFam" id="3.30.70.1660:FF:000002">
    <property type="entry name" value="Peptide chain release factor 1"/>
    <property type="match status" value="1"/>
</dbReference>
<dbReference type="FunFam" id="3.30.70.1660:FF:000004">
    <property type="entry name" value="Peptide chain release factor 1"/>
    <property type="match status" value="1"/>
</dbReference>
<dbReference type="Gene3D" id="3.30.160.20">
    <property type="match status" value="1"/>
</dbReference>
<dbReference type="Gene3D" id="3.30.70.1660">
    <property type="match status" value="2"/>
</dbReference>
<dbReference type="Gene3D" id="6.10.140.1950">
    <property type="match status" value="1"/>
</dbReference>
<dbReference type="HAMAP" id="MF_00093">
    <property type="entry name" value="Rel_fac_1"/>
    <property type="match status" value="1"/>
</dbReference>
<dbReference type="InterPro" id="IPR005139">
    <property type="entry name" value="PCRF"/>
</dbReference>
<dbReference type="InterPro" id="IPR000352">
    <property type="entry name" value="Pep_chain_release_fac_I"/>
</dbReference>
<dbReference type="InterPro" id="IPR045853">
    <property type="entry name" value="Pep_chain_release_fac_I_sf"/>
</dbReference>
<dbReference type="InterPro" id="IPR050057">
    <property type="entry name" value="Prokaryotic/Mito_RF"/>
</dbReference>
<dbReference type="InterPro" id="IPR004373">
    <property type="entry name" value="RF-1"/>
</dbReference>
<dbReference type="NCBIfam" id="TIGR00019">
    <property type="entry name" value="prfA"/>
    <property type="match status" value="1"/>
</dbReference>
<dbReference type="NCBIfam" id="NF001859">
    <property type="entry name" value="PRK00591.1"/>
    <property type="match status" value="1"/>
</dbReference>
<dbReference type="PANTHER" id="PTHR43804">
    <property type="entry name" value="LD18447P"/>
    <property type="match status" value="1"/>
</dbReference>
<dbReference type="PANTHER" id="PTHR43804:SF7">
    <property type="entry name" value="LD18447P"/>
    <property type="match status" value="1"/>
</dbReference>
<dbReference type="Pfam" id="PF03462">
    <property type="entry name" value="PCRF"/>
    <property type="match status" value="1"/>
</dbReference>
<dbReference type="Pfam" id="PF00472">
    <property type="entry name" value="RF-1"/>
    <property type="match status" value="1"/>
</dbReference>
<dbReference type="SMART" id="SM00937">
    <property type="entry name" value="PCRF"/>
    <property type="match status" value="1"/>
</dbReference>
<dbReference type="SUPFAM" id="SSF75620">
    <property type="entry name" value="Release factor"/>
    <property type="match status" value="1"/>
</dbReference>
<dbReference type="PROSITE" id="PS00745">
    <property type="entry name" value="RF_PROK_I"/>
    <property type="match status" value="1"/>
</dbReference>
<comment type="function">
    <text evidence="1">Peptide chain release factor 1 directs the termination of translation in response to the peptide chain termination codons UAG and UAA.</text>
</comment>
<comment type="subcellular location">
    <subcellularLocation>
        <location evidence="1">Cytoplasm</location>
    </subcellularLocation>
</comment>
<comment type="PTM">
    <text evidence="1">Methylated by PrmC. Methylation increases the termination efficiency of RF1.</text>
</comment>
<comment type="similarity">
    <text evidence="1">Belongs to the prokaryotic/mitochondrial release factor family.</text>
</comment>
<feature type="chain" id="PRO_1000093506" description="Peptide chain release factor 1">
    <location>
        <begin position="1"/>
        <end position="364"/>
    </location>
</feature>
<feature type="modified residue" description="N5-methylglutamine" evidence="1">
    <location>
        <position position="232"/>
    </location>
</feature>
<reference key="1">
    <citation type="journal article" date="2007" name="Nat. Biotechnol.">
        <title>Complete genome sequence of the myxobacterium Sorangium cellulosum.</title>
        <authorList>
            <person name="Schneiker S."/>
            <person name="Perlova O."/>
            <person name="Kaiser O."/>
            <person name="Gerth K."/>
            <person name="Alici A."/>
            <person name="Altmeyer M.O."/>
            <person name="Bartels D."/>
            <person name="Bekel T."/>
            <person name="Beyer S."/>
            <person name="Bode E."/>
            <person name="Bode H.B."/>
            <person name="Bolten C.J."/>
            <person name="Choudhuri J.V."/>
            <person name="Doss S."/>
            <person name="Elnakady Y.A."/>
            <person name="Frank B."/>
            <person name="Gaigalat L."/>
            <person name="Goesmann A."/>
            <person name="Groeger C."/>
            <person name="Gross F."/>
            <person name="Jelsbak L."/>
            <person name="Jelsbak L."/>
            <person name="Kalinowski J."/>
            <person name="Kegler C."/>
            <person name="Knauber T."/>
            <person name="Konietzny S."/>
            <person name="Kopp M."/>
            <person name="Krause L."/>
            <person name="Krug D."/>
            <person name="Linke B."/>
            <person name="Mahmud T."/>
            <person name="Martinez-Arias R."/>
            <person name="McHardy A.C."/>
            <person name="Merai M."/>
            <person name="Meyer F."/>
            <person name="Mormann S."/>
            <person name="Munoz-Dorado J."/>
            <person name="Perez J."/>
            <person name="Pradella S."/>
            <person name="Rachid S."/>
            <person name="Raddatz G."/>
            <person name="Rosenau F."/>
            <person name="Rueckert C."/>
            <person name="Sasse F."/>
            <person name="Scharfe M."/>
            <person name="Schuster S.C."/>
            <person name="Suen G."/>
            <person name="Treuner-Lange A."/>
            <person name="Velicer G.J."/>
            <person name="Vorholter F.-J."/>
            <person name="Weissman K.J."/>
            <person name="Welch R.D."/>
            <person name="Wenzel S.C."/>
            <person name="Whitworth D.E."/>
            <person name="Wilhelm S."/>
            <person name="Wittmann C."/>
            <person name="Bloecker H."/>
            <person name="Puehler A."/>
            <person name="Mueller R."/>
        </authorList>
    </citation>
    <scope>NUCLEOTIDE SEQUENCE [LARGE SCALE GENOMIC DNA]</scope>
    <source>
        <strain>So ce56</strain>
    </source>
</reference>
<keyword id="KW-0963">Cytoplasm</keyword>
<keyword id="KW-0488">Methylation</keyword>
<keyword id="KW-0648">Protein biosynthesis</keyword>
<keyword id="KW-1185">Reference proteome</keyword>
<organism>
    <name type="scientific">Sorangium cellulosum (strain So ce56)</name>
    <name type="common">Polyangium cellulosum (strain So ce56)</name>
    <dbReference type="NCBI Taxonomy" id="448385"/>
    <lineage>
        <taxon>Bacteria</taxon>
        <taxon>Pseudomonadati</taxon>
        <taxon>Myxococcota</taxon>
        <taxon>Polyangia</taxon>
        <taxon>Polyangiales</taxon>
        <taxon>Polyangiaceae</taxon>
        <taxon>Sorangium</taxon>
    </lineage>
</organism>
<sequence length="364" mass="40630">MLPIAKLEAVQRRFQELEHLMCSPAVLAAPAELQRLNRERTEIEPVVVAFARMRDVERRIAEDREALSDPDLSELAQAELPELELERERLAAELEVLLLPKDPNDTRNTVIEIRSGEGGEEAALFAADLFRMLCRYAETKRWKVEVLNLSEASAGGYKEVAALITGQDVYSHLRYEGGVHRVQRVPSTETQGRIHTSTATVAVLPEADEVDVHIDEKDLEISIAASGGPGGQGVNTTNSAVQIKHLPTGMIVKCQDERSQLKNKAKAMKVLRSRLLELEQRRQEEAQSAERRTMVGTGERAQKVRTYNFPQNRVTDHRIGLTLHKLDKIIEGDLEELIGALRTHRQAELLRRGGLSGPALEPAT</sequence>